<proteinExistence type="evidence at protein level"/>
<protein>
    <recommendedName>
        <fullName>Sorting nexin-20</fullName>
    </recommendedName>
</protein>
<evidence type="ECO:0000250" key="1">
    <source>
        <dbReference type="UniProtKB" id="Q6P4T1"/>
    </source>
</evidence>
<evidence type="ECO:0000250" key="2">
    <source>
        <dbReference type="UniProtKB" id="Q7Z614"/>
    </source>
</evidence>
<evidence type="ECO:0000250" key="3">
    <source>
        <dbReference type="UniProtKB" id="Q96L94"/>
    </source>
</evidence>
<evidence type="ECO:0000255" key="4">
    <source>
        <dbReference type="PROSITE-ProRule" id="PRU00147"/>
    </source>
</evidence>
<evidence type="ECO:0000256" key="5">
    <source>
        <dbReference type="SAM" id="MobiDB-lite"/>
    </source>
</evidence>
<evidence type="ECO:0000305" key="6"/>
<evidence type="ECO:0007744" key="7">
    <source>
    </source>
</evidence>
<dbReference type="EMBL" id="BC091194">
    <property type="protein sequence ID" value="AAH91194.1"/>
    <property type="molecule type" value="mRNA"/>
</dbReference>
<dbReference type="RefSeq" id="NP_001020170.1">
    <property type="nucleotide sequence ID" value="NM_001024999.1"/>
</dbReference>
<dbReference type="SMR" id="Q5BK61"/>
<dbReference type="FunCoup" id="Q5BK61">
    <property type="interactions" value="125"/>
</dbReference>
<dbReference type="STRING" id="10116.ENSRNOP00000019130"/>
<dbReference type="iPTMnet" id="Q5BK61"/>
<dbReference type="PhosphoSitePlus" id="Q5BK61"/>
<dbReference type="PaxDb" id="10116-ENSRNOP00000019130"/>
<dbReference type="Ensembl" id="ENSRNOT00000019130.6">
    <property type="protein sequence ID" value="ENSRNOP00000019130.4"/>
    <property type="gene ID" value="ENSRNOG00000014202.6"/>
</dbReference>
<dbReference type="GeneID" id="307742"/>
<dbReference type="KEGG" id="rno:307742"/>
<dbReference type="AGR" id="RGD:1307787"/>
<dbReference type="CTD" id="124460"/>
<dbReference type="RGD" id="1307787">
    <property type="gene designation" value="Snx20"/>
</dbReference>
<dbReference type="eggNOG" id="KOG2101">
    <property type="taxonomic scope" value="Eukaryota"/>
</dbReference>
<dbReference type="GeneTree" id="ENSGT00530000063759"/>
<dbReference type="HOGENOM" id="CLU_059132_0_0_1"/>
<dbReference type="InParanoid" id="Q5BK61"/>
<dbReference type="OMA" id="ISCQVRK"/>
<dbReference type="OrthoDB" id="10254720at2759"/>
<dbReference type="PhylomeDB" id="Q5BK61"/>
<dbReference type="TreeFam" id="TF326807"/>
<dbReference type="PRO" id="PR:Q5BK61"/>
<dbReference type="Proteomes" id="UP000002494">
    <property type="component" value="Chromosome 19"/>
</dbReference>
<dbReference type="Bgee" id="ENSRNOG00000014202">
    <property type="expression patterns" value="Expressed in spleen and 19 other cell types or tissues"/>
</dbReference>
<dbReference type="GO" id="GO:0031901">
    <property type="term" value="C:early endosome membrane"/>
    <property type="evidence" value="ECO:0000250"/>
    <property type="project" value="UniProtKB"/>
</dbReference>
<dbReference type="GO" id="GO:0005654">
    <property type="term" value="C:nucleoplasm"/>
    <property type="evidence" value="ECO:0007669"/>
    <property type="project" value="Ensembl"/>
</dbReference>
<dbReference type="GO" id="GO:0005886">
    <property type="term" value="C:plasma membrane"/>
    <property type="evidence" value="ECO:0007669"/>
    <property type="project" value="UniProtKB-SubCell"/>
</dbReference>
<dbReference type="GO" id="GO:1901981">
    <property type="term" value="F:phosphatidylinositol phosphate binding"/>
    <property type="evidence" value="ECO:0000318"/>
    <property type="project" value="GO_Central"/>
</dbReference>
<dbReference type="GO" id="GO:0032266">
    <property type="term" value="F:phosphatidylinositol-3-phosphate binding"/>
    <property type="evidence" value="ECO:0000250"/>
    <property type="project" value="UniProtKB"/>
</dbReference>
<dbReference type="GO" id="GO:0005546">
    <property type="term" value="F:phosphatidylinositol-4,5-bisphosphate binding"/>
    <property type="evidence" value="ECO:0000250"/>
    <property type="project" value="UniProtKB"/>
</dbReference>
<dbReference type="GO" id="GO:0015031">
    <property type="term" value="P:protein transport"/>
    <property type="evidence" value="ECO:0007669"/>
    <property type="project" value="UniProtKB-KW"/>
</dbReference>
<dbReference type="FunFam" id="3.30.1520.10:FF:000025">
    <property type="entry name" value="Sorting nexin 20"/>
    <property type="match status" value="1"/>
</dbReference>
<dbReference type="Gene3D" id="3.30.1520.10">
    <property type="entry name" value="Phox-like domain"/>
    <property type="match status" value="1"/>
</dbReference>
<dbReference type="InterPro" id="IPR001683">
    <property type="entry name" value="PX_dom"/>
</dbReference>
<dbReference type="InterPro" id="IPR036871">
    <property type="entry name" value="PX_dom_sf"/>
</dbReference>
<dbReference type="InterPro" id="IPR039937">
    <property type="entry name" value="SNX20/SNX21"/>
</dbReference>
<dbReference type="PANTHER" id="PTHR20939">
    <property type="entry name" value="SORTING NEXIN 20, 21"/>
    <property type="match status" value="1"/>
</dbReference>
<dbReference type="PANTHER" id="PTHR20939:SF1">
    <property type="entry name" value="SORTING NEXIN-20"/>
    <property type="match status" value="1"/>
</dbReference>
<dbReference type="Pfam" id="PF00787">
    <property type="entry name" value="PX"/>
    <property type="match status" value="1"/>
</dbReference>
<dbReference type="SMART" id="SM00312">
    <property type="entry name" value="PX"/>
    <property type="match status" value="1"/>
</dbReference>
<dbReference type="SUPFAM" id="SSF64268">
    <property type="entry name" value="PX domain"/>
    <property type="match status" value="1"/>
</dbReference>
<dbReference type="PROSITE" id="PS50195">
    <property type="entry name" value="PX"/>
    <property type="match status" value="1"/>
</dbReference>
<organism>
    <name type="scientific">Rattus norvegicus</name>
    <name type="common">Rat</name>
    <dbReference type="NCBI Taxonomy" id="10116"/>
    <lineage>
        <taxon>Eukaryota</taxon>
        <taxon>Metazoa</taxon>
        <taxon>Chordata</taxon>
        <taxon>Craniata</taxon>
        <taxon>Vertebrata</taxon>
        <taxon>Euteleostomi</taxon>
        <taxon>Mammalia</taxon>
        <taxon>Eutheria</taxon>
        <taxon>Euarchontoglires</taxon>
        <taxon>Glires</taxon>
        <taxon>Rodentia</taxon>
        <taxon>Myomorpha</taxon>
        <taxon>Muroidea</taxon>
        <taxon>Muridae</taxon>
        <taxon>Murinae</taxon>
        <taxon>Rattus</taxon>
    </lineage>
</organism>
<comment type="function">
    <text evidence="2">May play a role in cellular vesicle trafficking. Has been proposed to function as a sorting protein that targets SELPLG into endosomes, but has no effect on SELPLG internalization from the cell surface, or on SELPLG-mediated cell-cell adhesion.</text>
</comment>
<comment type="subunit">
    <text evidence="2">Interacts with SELPLG. Interaction with SELPLG is controversial.</text>
</comment>
<comment type="subcellular location">
    <subcellularLocation>
        <location evidence="2">Early endosome membrane</location>
        <topology evidence="2">Peripheral membrane protein</topology>
        <orientation evidence="2">Cytoplasmic side</orientation>
    </subcellularLocation>
    <subcellularLocation>
        <location evidence="2">Cell membrane</location>
    </subcellularLocation>
    <subcellularLocation>
        <location evidence="2">Cytoplasm</location>
    </subcellularLocation>
    <subcellularLocation>
        <location evidence="2">Nucleus</location>
    </subcellularLocation>
</comment>
<comment type="domain">
    <text evidence="2">The PX domain binds phosphatidylinositol 3-phosphate which is necessary for localization to the endosomes.</text>
</comment>
<comment type="similarity">
    <text evidence="6">Belongs to the sorting nexin family.</text>
</comment>
<feature type="chain" id="PRO_0000325821" description="Sorting nexin-20">
    <location>
        <begin position="1"/>
        <end position="313"/>
    </location>
</feature>
<feature type="domain" description="PX" evidence="4">
    <location>
        <begin position="71"/>
        <end position="188"/>
    </location>
</feature>
<feature type="region of interest" description="Disordered" evidence="5">
    <location>
        <begin position="1"/>
        <end position="61"/>
    </location>
</feature>
<feature type="compositionally biased region" description="Pro residues" evidence="5">
    <location>
        <begin position="29"/>
        <end position="38"/>
    </location>
</feature>
<feature type="compositionally biased region" description="Polar residues" evidence="5">
    <location>
        <begin position="45"/>
        <end position="55"/>
    </location>
</feature>
<feature type="binding site" evidence="1">
    <location>
        <position position="113"/>
    </location>
    <ligand>
        <name>a 1,2-diacyl-sn-glycero-3-phospho-(1D-myo-inositol-3-phosphate)</name>
        <dbReference type="ChEBI" id="CHEBI:58088"/>
    </ligand>
</feature>
<feature type="binding site" evidence="3">
    <location>
        <position position="115"/>
    </location>
    <ligand>
        <name>a 1,2-diacyl-sn-glycero-3-phospho-(1D-myo-inositol-3-phosphate)</name>
        <dbReference type="ChEBI" id="CHEBI:58088"/>
    </ligand>
</feature>
<feature type="binding site" evidence="3">
    <location>
        <position position="140"/>
    </location>
    <ligand>
        <name>a 1,2-diacyl-sn-glycero-3-phospho-(1D-myo-inositol-3-phosphate)</name>
        <dbReference type="ChEBI" id="CHEBI:58088"/>
    </ligand>
</feature>
<feature type="binding site" evidence="1">
    <location>
        <position position="154"/>
    </location>
    <ligand>
        <name>a 1,2-diacyl-sn-glycero-3-phospho-(1D-myo-inositol-3-phosphate)</name>
        <dbReference type="ChEBI" id="CHEBI:58088"/>
    </ligand>
</feature>
<feature type="modified residue" description="Phosphoserine" evidence="7">
    <location>
        <position position="3"/>
    </location>
</feature>
<accession>Q5BK61</accession>
<reference key="1">
    <citation type="journal article" date="2004" name="Genome Res.">
        <title>The status, quality, and expansion of the NIH full-length cDNA project: the Mammalian Gene Collection (MGC).</title>
        <authorList>
            <consortium name="The MGC Project Team"/>
        </authorList>
    </citation>
    <scope>NUCLEOTIDE SEQUENCE [LARGE SCALE MRNA]</scope>
    <source>
        <tissue>Spleen</tissue>
    </source>
</reference>
<reference key="2">
    <citation type="journal article" date="2012" name="Nat. Commun.">
        <title>Quantitative maps of protein phosphorylation sites across 14 different rat organs and tissues.</title>
        <authorList>
            <person name="Lundby A."/>
            <person name="Secher A."/>
            <person name="Lage K."/>
            <person name="Nordsborg N.B."/>
            <person name="Dmytriyev A."/>
            <person name="Lundby C."/>
            <person name="Olsen J.V."/>
        </authorList>
    </citation>
    <scope>PHOSPHORYLATION [LARGE SCALE ANALYSIS] AT SER-3</scope>
    <scope>IDENTIFICATION BY MASS SPECTROMETRY [LARGE SCALE ANALYSIS]</scope>
</reference>
<sequence>MASPQHPGGPGWTGPRNQCITRTRQEVLPPGPDLPCPGPEEAQDGPTSNSNMTTRELQEHWQKEKSRWKHVRLLFEIASARIEERKVSKFVMYQVVVIQTGSFDSDKAVVERRYSDFERLQRALLKRFGPELEDVTFPRKRLTGNLSAETICERRLELREYLRLLYAVRAVRRSREFADFLTRPELCEAFGCLRAGQYARALDLLGRVVPLQEKLTAHCPSAPVPALCAMLVCLRDLERPAEAFAVGERALRRLGARESHRYYAPLLDAMVRLAYALGKDLASLQGRLDESQLRRPTHRGATLKELTVREYLS</sequence>
<keyword id="KW-1003">Cell membrane</keyword>
<keyword id="KW-0963">Cytoplasm</keyword>
<keyword id="KW-0967">Endosome</keyword>
<keyword id="KW-0446">Lipid-binding</keyword>
<keyword id="KW-0472">Membrane</keyword>
<keyword id="KW-0539">Nucleus</keyword>
<keyword id="KW-0597">Phosphoprotein</keyword>
<keyword id="KW-0653">Protein transport</keyword>
<keyword id="KW-1185">Reference proteome</keyword>
<keyword id="KW-0813">Transport</keyword>
<gene>
    <name type="primary">Snx20</name>
</gene>
<name>SNX20_RAT</name>